<sequence>MIASKFGIGQQVRHSLLGYLGVVVDIDPEYSLDEPSPDELAVNDELRAAPWYHVVMEDDDGQPVHTYLAEAQLRSEMRDEHPEQPSMDELARTIRKQLQAPRLRN</sequence>
<evidence type="ECO:0000255" key="1">
    <source>
        <dbReference type="HAMAP-Rule" id="MF_01194"/>
    </source>
</evidence>
<evidence type="ECO:0000256" key="2">
    <source>
        <dbReference type="SAM" id="MobiDB-lite"/>
    </source>
</evidence>
<protein>
    <recommendedName>
        <fullName evidence="1">Heat shock protein HspQ</fullName>
    </recommendedName>
</protein>
<dbReference type="EMBL" id="AE014613">
    <property type="protein sequence ID" value="AAO69459.1"/>
    <property type="molecule type" value="Genomic_DNA"/>
</dbReference>
<dbReference type="EMBL" id="AL513382">
    <property type="protein sequence ID" value="CAD08205.1"/>
    <property type="molecule type" value="Genomic_DNA"/>
</dbReference>
<dbReference type="RefSeq" id="NP_455577.1">
    <property type="nucleotide sequence ID" value="NC_003198.1"/>
</dbReference>
<dbReference type="RefSeq" id="WP_000561983.1">
    <property type="nucleotide sequence ID" value="NZ_WSUR01000013.1"/>
</dbReference>
<dbReference type="SMR" id="Q8XFC1"/>
<dbReference type="STRING" id="220341.gene:17585083"/>
<dbReference type="GeneID" id="66755429"/>
<dbReference type="KEGG" id="stt:t1841"/>
<dbReference type="KEGG" id="sty:STY1102"/>
<dbReference type="PATRIC" id="fig|220341.7.peg.1108"/>
<dbReference type="eggNOG" id="COG3785">
    <property type="taxonomic scope" value="Bacteria"/>
</dbReference>
<dbReference type="HOGENOM" id="CLU_123865_1_0_6"/>
<dbReference type="OMA" id="LRTAPWY"/>
<dbReference type="OrthoDB" id="9806050at2"/>
<dbReference type="Proteomes" id="UP000000541">
    <property type="component" value="Chromosome"/>
</dbReference>
<dbReference type="Proteomes" id="UP000002670">
    <property type="component" value="Chromosome"/>
</dbReference>
<dbReference type="GO" id="GO:0005737">
    <property type="term" value="C:cytoplasm"/>
    <property type="evidence" value="ECO:0007669"/>
    <property type="project" value="UniProtKB-SubCell"/>
</dbReference>
<dbReference type="GO" id="GO:0003677">
    <property type="term" value="F:DNA binding"/>
    <property type="evidence" value="ECO:0007669"/>
    <property type="project" value="InterPro"/>
</dbReference>
<dbReference type="GO" id="GO:0009408">
    <property type="term" value="P:response to heat"/>
    <property type="evidence" value="ECO:0007669"/>
    <property type="project" value="UniProtKB-UniRule"/>
</dbReference>
<dbReference type="Gene3D" id="2.30.30.390">
    <property type="entry name" value="Hemimethylated DNA-binding domain"/>
    <property type="match status" value="1"/>
</dbReference>
<dbReference type="HAMAP" id="MF_01194">
    <property type="entry name" value="HspQ"/>
    <property type="match status" value="1"/>
</dbReference>
<dbReference type="InterPro" id="IPR011722">
    <property type="entry name" value="Hemimethylated_DNA-bd_dom"/>
</dbReference>
<dbReference type="InterPro" id="IPR036623">
    <property type="entry name" value="Hemimethylated_DNA-bd_sf"/>
</dbReference>
<dbReference type="InterPro" id="IPR022866">
    <property type="entry name" value="HspQ"/>
</dbReference>
<dbReference type="NCBIfam" id="NF010729">
    <property type="entry name" value="PRK14129.1"/>
    <property type="match status" value="1"/>
</dbReference>
<dbReference type="NCBIfam" id="TIGR02097">
    <property type="entry name" value="yccV"/>
    <property type="match status" value="1"/>
</dbReference>
<dbReference type="Pfam" id="PF08755">
    <property type="entry name" value="YccV-like"/>
    <property type="match status" value="1"/>
</dbReference>
<dbReference type="SMART" id="SM00992">
    <property type="entry name" value="YccV-like"/>
    <property type="match status" value="1"/>
</dbReference>
<dbReference type="SUPFAM" id="SSF141255">
    <property type="entry name" value="YccV-like"/>
    <property type="match status" value="1"/>
</dbReference>
<reference key="1">
    <citation type="journal article" date="2003" name="J. Bacteriol.">
        <title>Comparative genomics of Salmonella enterica serovar Typhi strains Ty2 and CT18.</title>
        <authorList>
            <person name="Deng W."/>
            <person name="Liou S.-R."/>
            <person name="Plunkett G. III"/>
            <person name="Mayhew G.F."/>
            <person name="Rose D.J."/>
            <person name="Burland V."/>
            <person name="Kodoyianni V."/>
            <person name="Schwartz D.C."/>
            <person name="Blattner F.R."/>
        </authorList>
    </citation>
    <scope>NUCLEOTIDE SEQUENCE [LARGE SCALE GENOMIC DNA]</scope>
    <source>
        <strain>ATCC 700931 / Ty2</strain>
    </source>
</reference>
<reference key="2">
    <citation type="journal article" date="2001" name="Nature">
        <title>Complete genome sequence of a multiple drug resistant Salmonella enterica serovar Typhi CT18.</title>
        <authorList>
            <person name="Parkhill J."/>
            <person name="Dougan G."/>
            <person name="James K.D."/>
            <person name="Thomson N.R."/>
            <person name="Pickard D."/>
            <person name="Wain J."/>
            <person name="Churcher C.M."/>
            <person name="Mungall K.L."/>
            <person name="Bentley S.D."/>
            <person name="Holden M.T.G."/>
            <person name="Sebaihia M."/>
            <person name="Baker S."/>
            <person name="Basham D."/>
            <person name="Brooks K."/>
            <person name="Chillingworth T."/>
            <person name="Connerton P."/>
            <person name="Cronin A."/>
            <person name="Davis P."/>
            <person name="Davies R.M."/>
            <person name="Dowd L."/>
            <person name="White N."/>
            <person name="Farrar J."/>
            <person name="Feltwell T."/>
            <person name="Hamlin N."/>
            <person name="Haque A."/>
            <person name="Hien T.T."/>
            <person name="Holroyd S."/>
            <person name="Jagels K."/>
            <person name="Krogh A."/>
            <person name="Larsen T.S."/>
            <person name="Leather S."/>
            <person name="Moule S."/>
            <person name="O'Gaora P."/>
            <person name="Parry C."/>
            <person name="Quail M.A."/>
            <person name="Rutherford K.M."/>
            <person name="Simmonds M."/>
            <person name="Skelton J."/>
            <person name="Stevens K."/>
            <person name="Whitehead S."/>
            <person name="Barrell B.G."/>
        </authorList>
    </citation>
    <scope>NUCLEOTIDE SEQUENCE [LARGE SCALE GENOMIC DNA]</scope>
    <source>
        <strain>CT18</strain>
    </source>
</reference>
<comment type="function">
    <text evidence="1">Involved in the degradation of certain denaturated proteins, including DnaA, during heat shock stress.</text>
</comment>
<comment type="subcellular location">
    <subcellularLocation>
        <location evidence="1">Cytoplasm</location>
    </subcellularLocation>
</comment>
<comment type="similarity">
    <text evidence="1">Belongs to the HspQ family.</text>
</comment>
<name>HSPQ_SALTI</name>
<gene>
    <name evidence="1" type="primary">hspQ</name>
    <name type="ordered locus">STY1102</name>
    <name type="ordered locus">t1841</name>
</gene>
<accession>Q8XFC1</accession>
<accession>Q7AN56</accession>
<proteinExistence type="inferred from homology"/>
<feature type="chain" id="PRO_0000315311" description="Heat shock protein HspQ">
    <location>
        <begin position="1"/>
        <end position="105"/>
    </location>
</feature>
<feature type="region of interest" description="Disordered" evidence="2">
    <location>
        <begin position="76"/>
        <end position="105"/>
    </location>
</feature>
<keyword id="KW-0963">Cytoplasm</keyword>
<keyword id="KW-0346">Stress response</keyword>
<organism>
    <name type="scientific">Salmonella typhi</name>
    <dbReference type="NCBI Taxonomy" id="90370"/>
    <lineage>
        <taxon>Bacteria</taxon>
        <taxon>Pseudomonadati</taxon>
        <taxon>Pseudomonadota</taxon>
        <taxon>Gammaproteobacteria</taxon>
        <taxon>Enterobacterales</taxon>
        <taxon>Enterobacteriaceae</taxon>
        <taxon>Salmonella</taxon>
    </lineage>
</organism>